<organism>
    <name type="scientific">Pseudomonas putida</name>
    <name type="common">Arthrobacter siderocapsulatus</name>
    <dbReference type="NCBI Taxonomy" id="303"/>
    <lineage>
        <taxon>Bacteria</taxon>
        <taxon>Pseudomonadati</taxon>
        <taxon>Pseudomonadota</taxon>
        <taxon>Gammaproteobacteria</taxon>
        <taxon>Pseudomonadales</taxon>
        <taxon>Pseudomonadaceae</taxon>
        <taxon>Pseudomonas</taxon>
    </lineage>
</organism>
<keyword id="KW-0963">Cytoplasm</keyword>
<keyword id="KW-0597">Phosphoprotein</keyword>
<gene>
    <name evidence="1" type="primary">mdcC</name>
</gene>
<feature type="chain" id="PRO_0000220288" description="Malonate decarboxylase acyl carrier protein">
    <location>
        <begin position="1"/>
        <end position="99"/>
    </location>
</feature>
<feature type="modified residue" description="O-(phosphoribosyl dephospho-coenzyme A)serine" evidence="1">
    <location>
        <position position="25"/>
    </location>
</feature>
<name>MDCC_PSEPU</name>
<sequence length="99" mass="10735">METLNFQFPAAEPGRGRTLVGCVSSGDLEVLIEPGTAGSLQIQVITSVNGSAARWAQLFQRLFEGRAWPAVNIDIHDFGATPGVVRLRLEQGFEEIAHD</sequence>
<dbReference type="EMBL" id="AB017138">
    <property type="protein sequence ID" value="BAA36206.1"/>
    <property type="molecule type" value="Genomic_DNA"/>
</dbReference>
<dbReference type="SMR" id="Q9Z451"/>
<dbReference type="GO" id="GO:0005737">
    <property type="term" value="C:cytoplasm"/>
    <property type="evidence" value="ECO:0007669"/>
    <property type="project" value="UniProtKB-SubCell"/>
</dbReference>
<dbReference type="GO" id="GO:0000036">
    <property type="term" value="F:acyl carrier activity"/>
    <property type="evidence" value="ECO:0007669"/>
    <property type="project" value="UniProtKB-UniRule"/>
</dbReference>
<dbReference type="HAMAP" id="MF_00710">
    <property type="entry name" value="Malonate_deCO2ase_dsu"/>
    <property type="match status" value="1"/>
</dbReference>
<dbReference type="InterPro" id="IPR023439">
    <property type="entry name" value="Mal_deCO2ase/Cit_lyase_ACP"/>
</dbReference>
<dbReference type="InterPro" id="IPR009662">
    <property type="entry name" value="Malonate_deCO2ase_dsu"/>
</dbReference>
<dbReference type="NCBIfam" id="TIGR03130">
    <property type="entry name" value="malonate_delta"/>
    <property type="match status" value="1"/>
</dbReference>
<dbReference type="NCBIfam" id="NF002293">
    <property type="entry name" value="PRK01220.1"/>
    <property type="match status" value="1"/>
</dbReference>
<dbReference type="Pfam" id="PF06857">
    <property type="entry name" value="ACP"/>
    <property type="match status" value="1"/>
</dbReference>
<evidence type="ECO:0000255" key="1">
    <source>
        <dbReference type="HAMAP-Rule" id="MF_00710"/>
    </source>
</evidence>
<protein>
    <recommendedName>
        <fullName evidence="1">Malonate decarboxylase acyl carrier protein</fullName>
    </recommendedName>
    <alternativeName>
        <fullName evidence="1">Malonate decarboxylase subunit delta</fullName>
    </alternativeName>
</protein>
<proteinExistence type="inferred from homology"/>
<comment type="function">
    <text evidence="1">Subunit of malonate decarboxylase, it is an acyl carrier protein to which acetyl and malonyl thioester residues are bound via a 2'-(5''-phosphoribosyl)-3'-dephospho-CoA prosthetic group and turn over during the catalytic mechanism.</text>
</comment>
<comment type="subcellular location">
    <subcellularLocation>
        <location evidence="1">Cytoplasm</location>
    </subcellularLocation>
</comment>
<comment type="PTM">
    <text evidence="1">Covalently binds the prosthetic group of malonate decarboxylase.</text>
</comment>
<comment type="similarity">
    <text evidence="1">Belongs to the MdcC family.</text>
</comment>
<accession>Q9Z451</accession>
<reference key="1">
    <citation type="journal article" date="1999" name="FEMS Microbiol. Lett.">
        <title>Cloning and characterization of mdc genes encoding malonate decarboxylase from Pseudomonas putida.</title>
        <authorList>
            <person name="Chohnan S."/>
            <person name="Kurusu Y."/>
            <person name="Nishihara H."/>
            <person name="Takamura Y."/>
        </authorList>
    </citation>
    <scope>NUCLEOTIDE SEQUENCE [GENOMIC DNA]</scope>
    <source>
        <strain>JCM 20089 / IAM 1177</strain>
    </source>
</reference>